<accession>A5F637</accession>
<accession>C3M3J5</accession>
<evidence type="ECO:0000255" key="1">
    <source>
        <dbReference type="HAMAP-Rule" id="MF_01119"/>
    </source>
</evidence>
<protein>
    <recommendedName>
        <fullName evidence="1">UPF0294 protein VC0395_A1830/VC395_2354</fullName>
    </recommendedName>
</protein>
<sequence>MKKRYWMAPLLIAAAGLAAFWSIFTIPTQPELVTIGRNQQGEPLLCYQHPQSEVLDLDGELNLLVWNIYKQNRANWSTQLTELSRDQQLLLLQEANMTPAFKEWIHQLGWDGTQARAFEAFGETAGVINLAKVMPTMACAYTQLEPWLRLPKSAIYARYRLSDGQELVVVNLHAVNFTYGTQEYQQQLIALLDELRDFTGPVIVAGDFNSWSEARMALLSTQLASVGLQEVRFSPDNRTTFINGLPLDHVFYRGLQLEKAEAPISDASDHNPLLVRFRLLN</sequence>
<organism>
    <name type="scientific">Vibrio cholerae serotype O1 (strain ATCC 39541 / Classical Ogawa 395 / O395)</name>
    <dbReference type="NCBI Taxonomy" id="345073"/>
    <lineage>
        <taxon>Bacteria</taxon>
        <taxon>Pseudomonadati</taxon>
        <taxon>Pseudomonadota</taxon>
        <taxon>Gammaproteobacteria</taxon>
        <taxon>Vibrionales</taxon>
        <taxon>Vibrionaceae</taxon>
        <taxon>Vibrio</taxon>
    </lineage>
</organism>
<dbReference type="EMBL" id="CP000627">
    <property type="protein sequence ID" value="ABQ21044.1"/>
    <property type="molecule type" value="Genomic_DNA"/>
</dbReference>
<dbReference type="EMBL" id="CP001235">
    <property type="protein sequence ID" value="ACP10344.1"/>
    <property type="molecule type" value="Genomic_DNA"/>
</dbReference>
<dbReference type="RefSeq" id="WP_000747834.1">
    <property type="nucleotide sequence ID" value="NZ_JAACZH010000022.1"/>
</dbReference>
<dbReference type="SMR" id="A5F637"/>
<dbReference type="KEGG" id="vco:VC0395_A1830"/>
<dbReference type="KEGG" id="vcr:VC395_2354"/>
<dbReference type="PATRIC" id="fig|345073.21.peg.2270"/>
<dbReference type="eggNOG" id="COG3021">
    <property type="taxonomic scope" value="Bacteria"/>
</dbReference>
<dbReference type="HOGENOM" id="CLU_083563_0_0_6"/>
<dbReference type="OrthoDB" id="9793162at2"/>
<dbReference type="Proteomes" id="UP000000249">
    <property type="component" value="Chromosome 2"/>
</dbReference>
<dbReference type="GO" id="GO:0005737">
    <property type="term" value="C:cytoplasm"/>
    <property type="evidence" value="ECO:0007669"/>
    <property type="project" value="UniProtKB-SubCell"/>
</dbReference>
<dbReference type="GO" id="GO:0003824">
    <property type="term" value="F:catalytic activity"/>
    <property type="evidence" value="ECO:0007669"/>
    <property type="project" value="InterPro"/>
</dbReference>
<dbReference type="Gene3D" id="3.60.10.10">
    <property type="entry name" value="Endonuclease/exonuclease/phosphatase"/>
    <property type="match status" value="1"/>
</dbReference>
<dbReference type="HAMAP" id="MF_01119">
    <property type="entry name" value="UPF0294"/>
    <property type="match status" value="1"/>
</dbReference>
<dbReference type="InterPro" id="IPR036691">
    <property type="entry name" value="Endo/exonu/phosph_ase_sf"/>
</dbReference>
<dbReference type="InterPro" id="IPR005135">
    <property type="entry name" value="Endo/exonuclease/phosphatase"/>
</dbReference>
<dbReference type="InterPro" id="IPR022958">
    <property type="entry name" value="UPF0294"/>
</dbReference>
<dbReference type="NCBIfam" id="NF003840">
    <property type="entry name" value="PRK05421.1-2"/>
    <property type="match status" value="1"/>
</dbReference>
<dbReference type="NCBIfam" id="NF003842">
    <property type="entry name" value="PRK05421.1-4"/>
    <property type="match status" value="1"/>
</dbReference>
<dbReference type="Pfam" id="PF03372">
    <property type="entry name" value="Exo_endo_phos"/>
    <property type="match status" value="1"/>
</dbReference>
<dbReference type="SUPFAM" id="SSF56219">
    <property type="entry name" value="DNase I-like"/>
    <property type="match status" value="1"/>
</dbReference>
<keyword id="KW-0963">Cytoplasm</keyword>
<reference key="1">
    <citation type="submission" date="2007-03" db="EMBL/GenBank/DDBJ databases">
        <authorList>
            <person name="Heidelberg J."/>
        </authorList>
    </citation>
    <scope>NUCLEOTIDE SEQUENCE [LARGE SCALE GENOMIC DNA]</scope>
    <source>
        <strain>ATCC 39541 / Classical Ogawa 395 / O395</strain>
    </source>
</reference>
<reference key="2">
    <citation type="journal article" date="2008" name="PLoS ONE">
        <title>A recalibrated molecular clock and independent origins for the cholera pandemic clones.</title>
        <authorList>
            <person name="Feng L."/>
            <person name="Reeves P.R."/>
            <person name="Lan R."/>
            <person name="Ren Y."/>
            <person name="Gao C."/>
            <person name="Zhou Z."/>
            <person name="Ren Y."/>
            <person name="Cheng J."/>
            <person name="Wang W."/>
            <person name="Wang J."/>
            <person name="Qian W."/>
            <person name="Li D."/>
            <person name="Wang L."/>
        </authorList>
    </citation>
    <scope>NUCLEOTIDE SEQUENCE [LARGE SCALE GENOMIC DNA]</scope>
    <source>
        <strain>ATCC 39541 / Classical Ogawa 395 / O395</strain>
    </source>
</reference>
<name>Y3030_VIBC3</name>
<gene>
    <name type="ordered locus">VC0395_A1830</name>
    <name type="ordered locus">VC395_2354</name>
</gene>
<proteinExistence type="inferred from homology"/>
<feature type="chain" id="PRO_1000073036" description="UPF0294 protein VC0395_A1830/VC395_2354">
    <location>
        <begin position="1"/>
        <end position="281"/>
    </location>
</feature>
<comment type="subcellular location">
    <subcellularLocation>
        <location evidence="1">Cytoplasm</location>
    </subcellularLocation>
</comment>
<comment type="similarity">
    <text evidence="1">Belongs to the UPF0294 family.</text>
</comment>